<protein>
    <recommendedName>
        <fullName>Uncharacterized protein AF_1303</fullName>
    </recommendedName>
</protein>
<feature type="chain" id="PRO_0000127985" description="Uncharacterized protein AF_1303">
    <location>
        <begin position="1"/>
        <end position="49"/>
    </location>
</feature>
<reference key="1">
    <citation type="journal article" date="1997" name="Nature">
        <title>The complete genome sequence of the hyperthermophilic, sulphate-reducing archaeon Archaeoglobus fulgidus.</title>
        <authorList>
            <person name="Klenk H.-P."/>
            <person name="Clayton R.A."/>
            <person name="Tomb J.-F."/>
            <person name="White O."/>
            <person name="Nelson K.E."/>
            <person name="Ketchum K.A."/>
            <person name="Dodson R.J."/>
            <person name="Gwinn M.L."/>
            <person name="Hickey E.K."/>
            <person name="Peterson J.D."/>
            <person name="Richardson D.L."/>
            <person name="Kerlavage A.R."/>
            <person name="Graham D.E."/>
            <person name="Kyrpides N.C."/>
            <person name="Fleischmann R.D."/>
            <person name="Quackenbush J."/>
            <person name="Lee N.H."/>
            <person name="Sutton G.G."/>
            <person name="Gill S.R."/>
            <person name="Kirkness E.F."/>
            <person name="Dougherty B.A."/>
            <person name="McKenney K."/>
            <person name="Adams M.D."/>
            <person name="Loftus B.J."/>
            <person name="Peterson S.N."/>
            <person name="Reich C.I."/>
            <person name="McNeil L.K."/>
            <person name="Badger J.H."/>
            <person name="Glodek A."/>
            <person name="Zhou L."/>
            <person name="Overbeek R."/>
            <person name="Gocayne J.D."/>
            <person name="Weidman J.F."/>
            <person name="McDonald L.A."/>
            <person name="Utterback T.R."/>
            <person name="Cotton M.D."/>
            <person name="Spriggs T."/>
            <person name="Artiach P."/>
            <person name="Kaine B.P."/>
            <person name="Sykes S.M."/>
            <person name="Sadow P.W."/>
            <person name="D'Andrea K.P."/>
            <person name="Bowman C."/>
            <person name="Fujii C."/>
            <person name="Garland S.A."/>
            <person name="Mason T.M."/>
            <person name="Olsen G.J."/>
            <person name="Fraser C.M."/>
            <person name="Smith H.O."/>
            <person name="Woese C.R."/>
            <person name="Venter J.C."/>
        </authorList>
    </citation>
    <scope>NUCLEOTIDE SEQUENCE [LARGE SCALE GENOMIC DNA]</scope>
    <source>
        <strain>ATCC 49558 / DSM 4304 / JCM 9628 / NBRC 100126 / VC-16</strain>
    </source>
</reference>
<keyword id="KW-1185">Reference proteome</keyword>
<gene>
    <name type="ordered locus">AF_1303</name>
</gene>
<proteinExistence type="predicted"/>
<sequence length="49" mass="6152">MKRAKKFKDYFEDIKPVTDEELEELLNEPPRRRNRGNFKKAKKEFYRDF</sequence>
<dbReference type="EMBL" id="AE000782">
    <property type="protein sequence ID" value="AAB89952.1"/>
    <property type="molecule type" value="Genomic_DNA"/>
</dbReference>
<dbReference type="PIR" id="F69412">
    <property type="entry name" value="F69412"/>
</dbReference>
<dbReference type="SMR" id="O28966"/>
<dbReference type="STRING" id="224325.AF_1303"/>
<dbReference type="PaxDb" id="224325-AF_1303"/>
<dbReference type="EnsemblBacteria" id="AAB89952">
    <property type="protein sequence ID" value="AAB89952"/>
    <property type="gene ID" value="AF_1303"/>
</dbReference>
<dbReference type="KEGG" id="afu:AF_1303"/>
<dbReference type="eggNOG" id="arCOG15203">
    <property type="taxonomic scope" value="Archaea"/>
</dbReference>
<dbReference type="HOGENOM" id="CLU_3130635_0_0_2"/>
<dbReference type="Proteomes" id="UP000002199">
    <property type="component" value="Chromosome"/>
</dbReference>
<organism>
    <name type="scientific">Archaeoglobus fulgidus (strain ATCC 49558 / DSM 4304 / JCM 9628 / NBRC 100126 / VC-16)</name>
    <dbReference type="NCBI Taxonomy" id="224325"/>
    <lineage>
        <taxon>Archaea</taxon>
        <taxon>Methanobacteriati</taxon>
        <taxon>Methanobacteriota</taxon>
        <taxon>Archaeoglobi</taxon>
        <taxon>Archaeoglobales</taxon>
        <taxon>Archaeoglobaceae</taxon>
        <taxon>Archaeoglobus</taxon>
    </lineage>
</organism>
<name>Y1303_ARCFU</name>
<accession>O28966</accession>